<feature type="chain" id="PRO_1000088141" description="Bifunctional protein GlmU">
    <location>
        <begin position="1"/>
        <end position="454"/>
    </location>
</feature>
<feature type="region of interest" description="Pyrophosphorylase" evidence="1">
    <location>
        <begin position="1"/>
        <end position="226"/>
    </location>
</feature>
<feature type="region of interest" description="Linker" evidence="1">
    <location>
        <begin position="227"/>
        <end position="247"/>
    </location>
</feature>
<feature type="region of interest" description="N-acetyltransferase" evidence="1">
    <location>
        <begin position="248"/>
        <end position="454"/>
    </location>
</feature>
<feature type="active site" description="Proton acceptor" evidence="1">
    <location>
        <position position="360"/>
    </location>
</feature>
<feature type="binding site" evidence="1">
    <location>
        <begin position="8"/>
        <end position="11"/>
    </location>
    <ligand>
        <name>UDP-N-acetyl-alpha-D-glucosamine</name>
        <dbReference type="ChEBI" id="CHEBI:57705"/>
    </ligand>
</feature>
<feature type="binding site" evidence="1">
    <location>
        <position position="22"/>
    </location>
    <ligand>
        <name>UDP-N-acetyl-alpha-D-glucosamine</name>
        <dbReference type="ChEBI" id="CHEBI:57705"/>
    </ligand>
</feature>
<feature type="binding site" evidence="1">
    <location>
        <position position="73"/>
    </location>
    <ligand>
        <name>UDP-N-acetyl-alpha-D-glucosamine</name>
        <dbReference type="ChEBI" id="CHEBI:57705"/>
    </ligand>
</feature>
<feature type="binding site" evidence="1">
    <location>
        <begin position="78"/>
        <end position="79"/>
    </location>
    <ligand>
        <name>UDP-N-acetyl-alpha-D-glucosamine</name>
        <dbReference type="ChEBI" id="CHEBI:57705"/>
    </ligand>
</feature>
<feature type="binding site" evidence="1">
    <location>
        <begin position="100"/>
        <end position="102"/>
    </location>
    <ligand>
        <name>UDP-N-acetyl-alpha-D-glucosamine</name>
        <dbReference type="ChEBI" id="CHEBI:57705"/>
    </ligand>
</feature>
<feature type="binding site" evidence="1">
    <location>
        <position position="102"/>
    </location>
    <ligand>
        <name>Mg(2+)</name>
        <dbReference type="ChEBI" id="CHEBI:18420"/>
    </ligand>
</feature>
<feature type="binding site" evidence="1">
    <location>
        <position position="137"/>
    </location>
    <ligand>
        <name>UDP-N-acetyl-alpha-D-glucosamine</name>
        <dbReference type="ChEBI" id="CHEBI:57705"/>
    </ligand>
</feature>
<feature type="binding site" evidence="1">
    <location>
        <position position="151"/>
    </location>
    <ligand>
        <name>UDP-N-acetyl-alpha-D-glucosamine</name>
        <dbReference type="ChEBI" id="CHEBI:57705"/>
    </ligand>
</feature>
<feature type="binding site" evidence="1">
    <location>
        <position position="166"/>
    </location>
    <ligand>
        <name>UDP-N-acetyl-alpha-D-glucosamine</name>
        <dbReference type="ChEBI" id="CHEBI:57705"/>
    </ligand>
</feature>
<feature type="binding site" evidence="1">
    <location>
        <position position="224"/>
    </location>
    <ligand>
        <name>Mg(2+)</name>
        <dbReference type="ChEBI" id="CHEBI:18420"/>
    </ligand>
</feature>
<feature type="binding site" evidence="1">
    <location>
        <position position="224"/>
    </location>
    <ligand>
        <name>UDP-N-acetyl-alpha-D-glucosamine</name>
        <dbReference type="ChEBI" id="CHEBI:57705"/>
    </ligand>
</feature>
<feature type="binding site" evidence="1">
    <location>
        <position position="330"/>
    </location>
    <ligand>
        <name>UDP-N-acetyl-alpha-D-glucosamine</name>
        <dbReference type="ChEBI" id="CHEBI:57705"/>
    </ligand>
</feature>
<feature type="binding site" evidence="1">
    <location>
        <position position="348"/>
    </location>
    <ligand>
        <name>UDP-N-acetyl-alpha-D-glucosamine</name>
        <dbReference type="ChEBI" id="CHEBI:57705"/>
    </ligand>
</feature>
<feature type="binding site" evidence="1">
    <location>
        <position position="363"/>
    </location>
    <ligand>
        <name>UDP-N-acetyl-alpha-D-glucosamine</name>
        <dbReference type="ChEBI" id="CHEBI:57705"/>
    </ligand>
</feature>
<feature type="binding site" evidence="1">
    <location>
        <position position="374"/>
    </location>
    <ligand>
        <name>UDP-N-acetyl-alpha-D-glucosamine</name>
        <dbReference type="ChEBI" id="CHEBI:57705"/>
    </ligand>
</feature>
<feature type="binding site" evidence="1">
    <location>
        <position position="377"/>
    </location>
    <ligand>
        <name>acetyl-CoA</name>
        <dbReference type="ChEBI" id="CHEBI:57288"/>
    </ligand>
</feature>
<feature type="binding site" evidence="1">
    <location>
        <begin position="383"/>
        <end position="384"/>
    </location>
    <ligand>
        <name>acetyl-CoA</name>
        <dbReference type="ChEBI" id="CHEBI:57288"/>
    </ligand>
</feature>
<feature type="binding site" evidence="1">
    <location>
        <position position="402"/>
    </location>
    <ligand>
        <name>acetyl-CoA</name>
        <dbReference type="ChEBI" id="CHEBI:57288"/>
    </ligand>
</feature>
<feature type="binding site" evidence="1">
    <location>
        <position position="420"/>
    </location>
    <ligand>
        <name>acetyl-CoA</name>
        <dbReference type="ChEBI" id="CHEBI:57288"/>
    </ligand>
</feature>
<feature type="binding site" evidence="1">
    <location>
        <position position="437"/>
    </location>
    <ligand>
        <name>acetyl-CoA</name>
        <dbReference type="ChEBI" id="CHEBI:57288"/>
    </ligand>
</feature>
<comment type="function">
    <text evidence="1">Catalyzes the last two sequential reactions in the de novo biosynthetic pathway for UDP-N-acetylglucosamine (UDP-GlcNAc). The C-terminal domain catalyzes the transfer of acetyl group from acetyl coenzyme A to glucosamine-1-phosphate (GlcN-1-P) to produce N-acetylglucosamine-1-phosphate (GlcNAc-1-P), which is converted into UDP-GlcNAc by the transfer of uridine 5-monophosphate (from uridine 5-triphosphate), a reaction catalyzed by the N-terminal domain.</text>
</comment>
<comment type="catalytic activity">
    <reaction evidence="1">
        <text>alpha-D-glucosamine 1-phosphate + acetyl-CoA = N-acetyl-alpha-D-glucosamine 1-phosphate + CoA + H(+)</text>
        <dbReference type="Rhea" id="RHEA:13725"/>
        <dbReference type="ChEBI" id="CHEBI:15378"/>
        <dbReference type="ChEBI" id="CHEBI:57287"/>
        <dbReference type="ChEBI" id="CHEBI:57288"/>
        <dbReference type="ChEBI" id="CHEBI:57776"/>
        <dbReference type="ChEBI" id="CHEBI:58516"/>
        <dbReference type="EC" id="2.3.1.157"/>
    </reaction>
</comment>
<comment type="catalytic activity">
    <reaction evidence="1">
        <text>N-acetyl-alpha-D-glucosamine 1-phosphate + UTP + H(+) = UDP-N-acetyl-alpha-D-glucosamine + diphosphate</text>
        <dbReference type="Rhea" id="RHEA:13509"/>
        <dbReference type="ChEBI" id="CHEBI:15378"/>
        <dbReference type="ChEBI" id="CHEBI:33019"/>
        <dbReference type="ChEBI" id="CHEBI:46398"/>
        <dbReference type="ChEBI" id="CHEBI:57705"/>
        <dbReference type="ChEBI" id="CHEBI:57776"/>
        <dbReference type="EC" id="2.7.7.23"/>
    </reaction>
</comment>
<comment type="cofactor">
    <cofactor evidence="1">
        <name>Mg(2+)</name>
        <dbReference type="ChEBI" id="CHEBI:18420"/>
    </cofactor>
    <text evidence="1">Binds 1 Mg(2+) ion per subunit.</text>
</comment>
<comment type="pathway">
    <text evidence="1">Nucleotide-sugar biosynthesis; UDP-N-acetyl-alpha-D-glucosamine biosynthesis; N-acetyl-alpha-D-glucosamine 1-phosphate from alpha-D-glucosamine 6-phosphate (route II): step 2/2.</text>
</comment>
<comment type="pathway">
    <text evidence="1">Nucleotide-sugar biosynthesis; UDP-N-acetyl-alpha-D-glucosamine biosynthesis; UDP-N-acetyl-alpha-D-glucosamine from N-acetyl-alpha-D-glucosamine 1-phosphate: step 1/1.</text>
</comment>
<comment type="pathway">
    <text evidence="1">Bacterial outer membrane biogenesis; LPS lipid A biosynthesis.</text>
</comment>
<comment type="subunit">
    <text evidence="1">Homotrimer.</text>
</comment>
<comment type="subcellular location">
    <subcellularLocation>
        <location evidence="1">Cytoplasm</location>
    </subcellularLocation>
</comment>
<comment type="similarity">
    <text evidence="1">In the N-terminal section; belongs to the N-acetylglucosamine-1-phosphate uridyltransferase family.</text>
</comment>
<comment type="similarity">
    <text evidence="1">In the C-terminal section; belongs to the transferase hexapeptide repeat family.</text>
</comment>
<organism>
    <name type="scientific">Shewanella pealeana (strain ATCC 700345 / ANG-SQ1)</name>
    <dbReference type="NCBI Taxonomy" id="398579"/>
    <lineage>
        <taxon>Bacteria</taxon>
        <taxon>Pseudomonadati</taxon>
        <taxon>Pseudomonadota</taxon>
        <taxon>Gammaproteobacteria</taxon>
        <taxon>Alteromonadales</taxon>
        <taxon>Shewanellaceae</taxon>
        <taxon>Shewanella</taxon>
    </lineage>
</organism>
<protein>
    <recommendedName>
        <fullName evidence="1">Bifunctional protein GlmU</fullName>
    </recommendedName>
    <domain>
        <recommendedName>
            <fullName evidence="1">UDP-N-acetylglucosamine pyrophosphorylase</fullName>
            <ecNumber evidence="1">2.7.7.23</ecNumber>
        </recommendedName>
        <alternativeName>
            <fullName evidence="1">N-acetylglucosamine-1-phosphate uridyltransferase</fullName>
        </alternativeName>
    </domain>
    <domain>
        <recommendedName>
            <fullName evidence="1">Glucosamine-1-phosphate N-acetyltransferase</fullName>
            <ecNumber evidence="1">2.3.1.157</ecNumber>
        </recommendedName>
    </domain>
</protein>
<evidence type="ECO:0000255" key="1">
    <source>
        <dbReference type="HAMAP-Rule" id="MF_01631"/>
    </source>
</evidence>
<gene>
    <name evidence="1" type="primary">glmU</name>
    <name type="ordered locus">Spea_4237</name>
</gene>
<accession>A8HAG0</accession>
<sequence length="454" mass="47960">MALNVVILAAGKGTRMRSDLPKVLHPIAHKSMVQHVIDTAYQVGSDAIQLVYGYGADKLQARLGEQQLNWVLQAEQLGTGHAVAQASANIADDDTVLILYGDVPLIQASTLEALLAAREENGLAILTVNLPNPTGYGRIVREGGSVVGIIEQKDANTEQLAINEINTGIMAAPGKQLKAWLGQLSSDNAQGEYYLTDIVAMAHRDGVAITTAQPESAVEVEGANNRVQLAQLERAYQARAAEKLMLEGANLRDPARIDIRGDVTVGMDVMIDVNVVIEGKVTIGNNVTIGAGVILIDCDISDNAVIKPYSIIESAKVGVDASAGPFARLRPGAELKEDAHIGNFVEMKKAVLGKGSKAGHLAYIGDATIGSGVNIGAGTITCNYDGANKFQTIIEDNVFVGSDTQLVAPVTIGKGATLGAGSTITKDVAENELVITRVKQRHLTGWPRPVKLKK</sequence>
<reference key="1">
    <citation type="submission" date="2007-10" db="EMBL/GenBank/DDBJ databases">
        <title>Complete sequence of Shewanella pealeana ATCC 700345.</title>
        <authorList>
            <consortium name="US DOE Joint Genome Institute"/>
            <person name="Copeland A."/>
            <person name="Lucas S."/>
            <person name="Lapidus A."/>
            <person name="Barry K."/>
            <person name="Glavina del Rio T."/>
            <person name="Dalin E."/>
            <person name="Tice H."/>
            <person name="Pitluck S."/>
            <person name="Chertkov O."/>
            <person name="Brettin T."/>
            <person name="Bruce D."/>
            <person name="Detter J.C."/>
            <person name="Han C."/>
            <person name="Schmutz J."/>
            <person name="Larimer F."/>
            <person name="Land M."/>
            <person name="Hauser L."/>
            <person name="Kyrpides N."/>
            <person name="Kim E."/>
            <person name="Zhao J.-S.Z."/>
            <person name="Manno D."/>
            <person name="Hawari J."/>
            <person name="Richardson P."/>
        </authorList>
    </citation>
    <scope>NUCLEOTIDE SEQUENCE [LARGE SCALE GENOMIC DNA]</scope>
    <source>
        <strain>ATCC 700345 / ANG-SQ1</strain>
    </source>
</reference>
<dbReference type="EC" id="2.7.7.23" evidence="1"/>
<dbReference type="EC" id="2.3.1.157" evidence="1"/>
<dbReference type="EMBL" id="CP000851">
    <property type="protein sequence ID" value="ABV89547.1"/>
    <property type="molecule type" value="Genomic_DNA"/>
</dbReference>
<dbReference type="RefSeq" id="WP_012157424.1">
    <property type="nucleotide sequence ID" value="NC_009901.1"/>
</dbReference>
<dbReference type="SMR" id="A8HAG0"/>
<dbReference type="STRING" id="398579.Spea_4237"/>
<dbReference type="KEGG" id="spl:Spea_4237"/>
<dbReference type="eggNOG" id="COG1207">
    <property type="taxonomic scope" value="Bacteria"/>
</dbReference>
<dbReference type="HOGENOM" id="CLU_029499_15_2_6"/>
<dbReference type="OrthoDB" id="9775031at2"/>
<dbReference type="UniPathway" id="UPA00113">
    <property type="reaction ID" value="UER00532"/>
</dbReference>
<dbReference type="UniPathway" id="UPA00113">
    <property type="reaction ID" value="UER00533"/>
</dbReference>
<dbReference type="UniPathway" id="UPA00973"/>
<dbReference type="Proteomes" id="UP000002608">
    <property type="component" value="Chromosome"/>
</dbReference>
<dbReference type="GO" id="GO:0005737">
    <property type="term" value="C:cytoplasm"/>
    <property type="evidence" value="ECO:0007669"/>
    <property type="project" value="UniProtKB-SubCell"/>
</dbReference>
<dbReference type="GO" id="GO:0016020">
    <property type="term" value="C:membrane"/>
    <property type="evidence" value="ECO:0007669"/>
    <property type="project" value="GOC"/>
</dbReference>
<dbReference type="GO" id="GO:0019134">
    <property type="term" value="F:glucosamine-1-phosphate N-acetyltransferase activity"/>
    <property type="evidence" value="ECO:0007669"/>
    <property type="project" value="UniProtKB-UniRule"/>
</dbReference>
<dbReference type="GO" id="GO:0000287">
    <property type="term" value="F:magnesium ion binding"/>
    <property type="evidence" value="ECO:0007669"/>
    <property type="project" value="UniProtKB-UniRule"/>
</dbReference>
<dbReference type="GO" id="GO:0003977">
    <property type="term" value="F:UDP-N-acetylglucosamine diphosphorylase activity"/>
    <property type="evidence" value="ECO:0007669"/>
    <property type="project" value="UniProtKB-UniRule"/>
</dbReference>
<dbReference type="GO" id="GO:0000902">
    <property type="term" value="P:cell morphogenesis"/>
    <property type="evidence" value="ECO:0007669"/>
    <property type="project" value="UniProtKB-UniRule"/>
</dbReference>
<dbReference type="GO" id="GO:0071555">
    <property type="term" value="P:cell wall organization"/>
    <property type="evidence" value="ECO:0007669"/>
    <property type="project" value="UniProtKB-KW"/>
</dbReference>
<dbReference type="GO" id="GO:0009245">
    <property type="term" value="P:lipid A biosynthetic process"/>
    <property type="evidence" value="ECO:0007669"/>
    <property type="project" value="UniProtKB-UniRule"/>
</dbReference>
<dbReference type="GO" id="GO:0009252">
    <property type="term" value="P:peptidoglycan biosynthetic process"/>
    <property type="evidence" value="ECO:0007669"/>
    <property type="project" value="UniProtKB-UniRule"/>
</dbReference>
<dbReference type="GO" id="GO:0008360">
    <property type="term" value="P:regulation of cell shape"/>
    <property type="evidence" value="ECO:0007669"/>
    <property type="project" value="UniProtKB-KW"/>
</dbReference>
<dbReference type="GO" id="GO:0006048">
    <property type="term" value="P:UDP-N-acetylglucosamine biosynthetic process"/>
    <property type="evidence" value="ECO:0007669"/>
    <property type="project" value="UniProtKB-UniPathway"/>
</dbReference>
<dbReference type="CDD" id="cd02540">
    <property type="entry name" value="GT2_GlmU_N_bac"/>
    <property type="match status" value="1"/>
</dbReference>
<dbReference type="CDD" id="cd03353">
    <property type="entry name" value="LbH_GlmU_C"/>
    <property type="match status" value="1"/>
</dbReference>
<dbReference type="Gene3D" id="2.160.10.10">
    <property type="entry name" value="Hexapeptide repeat proteins"/>
    <property type="match status" value="1"/>
</dbReference>
<dbReference type="Gene3D" id="3.90.550.10">
    <property type="entry name" value="Spore Coat Polysaccharide Biosynthesis Protein SpsA, Chain A"/>
    <property type="match status" value="1"/>
</dbReference>
<dbReference type="HAMAP" id="MF_01631">
    <property type="entry name" value="GlmU"/>
    <property type="match status" value="1"/>
</dbReference>
<dbReference type="InterPro" id="IPR005882">
    <property type="entry name" value="Bifunctional_GlmU"/>
</dbReference>
<dbReference type="InterPro" id="IPR050065">
    <property type="entry name" value="GlmU-like"/>
</dbReference>
<dbReference type="InterPro" id="IPR038009">
    <property type="entry name" value="GlmU_C_LbH"/>
</dbReference>
<dbReference type="InterPro" id="IPR001451">
    <property type="entry name" value="Hexapep"/>
</dbReference>
<dbReference type="InterPro" id="IPR018357">
    <property type="entry name" value="Hexapep_transf_CS"/>
</dbReference>
<dbReference type="InterPro" id="IPR025877">
    <property type="entry name" value="MobA-like_NTP_Trfase"/>
</dbReference>
<dbReference type="InterPro" id="IPR029044">
    <property type="entry name" value="Nucleotide-diphossugar_trans"/>
</dbReference>
<dbReference type="InterPro" id="IPR011004">
    <property type="entry name" value="Trimer_LpxA-like_sf"/>
</dbReference>
<dbReference type="NCBIfam" id="TIGR01173">
    <property type="entry name" value="glmU"/>
    <property type="match status" value="1"/>
</dbReference>
<dbReference type="NCBIfam" id="NF006986">
    <property type="entry name" value="PRK09451.1"/>
    <property type="match status" value="1"/>
</dbReference>
<dbReference type="PANTHER" id="PTHR43584:SF3">
    <property type="entry name" value="BIFUNCTIONAL PROTEIN GLMU"/>
    <property type="match status" value="1"/>
</dbReference>
<dbReference type="PANTHER" id="PTHR43584">
    <property type="entry name" value="NUCLEOTIDYL TRANSFERASE"/>
    <property type="match status" value="1"/>
</dbReference>
<dbReference type="Pfam" id="PF00132">
    <property type="entry name" value="Hexapep"/>
    <property type="match status" value="2"/>
</dbReference>
<dbReference type="Pfam" id="PF12804">
    <property type="entry name" value="NTP_transf_3"/>
    <property type="match status" value="1"/>
</dbReference>
<dbReference type="SUPFAM" id="SSF53448">
    <property type="entry name" value="Nucleotide-diphospho-sugar transferases"/>
    <property type="match status" value="1"/>
</dbReference>
<dbReference type="SUPFAM" id="SSF51161">
    <property type="entry name" value="Trimeric LpxA-like enzymes"/>
    <property type="match status" value="1"/>
</dbReference>
<dbReference type="PROSITE" id="PS00101">
    <property type="entry name" value="HEXAPEP_TRANSFERASES"/>
    <property type="match status" value="2"/>
</dbReference>
<proteinExistence type="inferred from homology"/>
<name>GLMU_SHEPA</name>
<keyword id="KW-0012">Acyltransferase</keyword>
<keyword id="KW-0133">Cell shape</keyword>
<keyword id="KW-0961">Cell wall biogenesis/degradation</keyword>
<keyword id="KW-0963">Cytoplasm</keyword>
<keyword id="KW-0460">Magnesium</keyword>
<keyword id="KW-0479">Metal-binding</keyword>
<keyword id="KW-0511">Multifunctional enzyme</keyword>
<keyword id="KW-0548">Nucleotidyltransferase</keyword>
<keyword id="KW-0573">Peptidoglycan synthesis</keyword>
<keyword id="KW-1185">Reference proteome</keyword>
<keyword id="KW-0677">Repeat</keyword>
<keyword id="KW-0808">Transferase</keyword>